<evidence type="ECO:0000250" key="1">
    <source>
        <dbReference type="UniProtKB" id="Q6PIX5"/>
    </source>
</evidence>
<evidence type="ECO:0000255" key="2"/>
<evidence type="ECO:0000269" key="3">
    <source>
    </source>
</evidence>
<evidence type="ECO:0000269" key="4">
    <source>
    </source>
</evidence>
<evidence type="ECO:0000269" key="5">
    <source>
    </source>
</evidence>
<evidence type="ECO:0000269" key="6">
    <source>
    </source>
</evidence>
<evidence type="ECO:0000269" key="7">
    <source>
    </source>
</evidence>
<evidence type="ECO:0000269" key="8">
    <source>
    </source>
</evidence>
<evidence type="ECO:0000269" key="9">
    <source>
    </source>
</evidence>
<evidence type="ECO:0000305" key="10"/>
<evidence type="ECO:0007744" key="11">
    <source>
    </source>
</evidence>
<organism>
    <name type="scientific">Homo sapiens</name>
    <name type="common">Human</name>
    <dbReference type="NCBI Taxonomy" id="9606"/>
    <lineage>
        <taxon>Eukaryota</taxon>
        <taxon>Metazoa</taxon>
        <taxon>Chordata</taxon>
        <taxon>Craniata</taxon>
        <taxon>Vertebrata</taxon>
        <taxon>Euteleostomi</taxon>
        <taxon>Mammalia</taxon>
        <taxon>Eutheria</taxon>
        <taxon>Euarchontoglires</taxon>
        <taxon>Primates</taxon>
        <taxon>Haplorrhini</taxon>
        <taxon>Catarrhini</taxon>
        <taxon>Hominidae</taxon>
        <taxon>Homo</taxon>
    </lineage>
</organism>
<protein>
    <recommendedName>
        <fullName>Inactive rhomboid protein 1</fullName>
        <shortName>iRhom1</shortName>
    </recommendedName>
    <alternativeName>
        <fullName>Epidermal growth factor receptor-related protein</fullName>
    </alternativeName>
    <alternativeName>
        <fullName>Rhomboid 5 homolog 1</fullName>
    </alternativeName>
    <alternativeName>
        <fullName>Rhomboid family member 1</fullName>
    </alternativeName>
    <alternativeName>
        <fullName>p100hRho</fullName>
    </alternativeName>
</protein>
<keyword id="KW-0256">Endoplasmic reticulum</keyword>
<keyword id="KW-0325">Glycoprotein</keyword>
<keyword id="KW-0333">Golgi apparatus</keyword>
<keyword id="KW-0340">Growth factor binding</keyword>
<keyword id="KW-0472">Membrane</keyword>
<keyword id="KW-0597">Phosphoprotein</keyword>
<keyword id="KW-0653">Protein transport</keyword>
<keyword id="KW-1267">Proteomics identification</keyword>
<keyword id="KW-1185">Reference proteome</keyword>
<keyword id="KW-0812">Transmembrane</keyword>
<keyword id="KW-1133">Transmembrane helix</keyword>
<keyword id="KW-0813">Transport</keyword>
<dbReference type="EMBL" id="DQ431198">
    <property type="protein sequence ID" value="ABD95905.1"/>
    <property type="status" value="ALT_SEQ"/>
    <property type="molecule type" value="Genomic_DNA"/>
</dbReference>
<dbReference type="EMBL" id="AK026010">
    <property type="protein sequence ID" value="BAB15318.1"/>
    <property type="molecule type" value="mRNA"/>
</dbReference>
<dbReference type="EMBL" id="AK291177">
    <property type="protein sequence ID" value="BAF83866.1"/>
    <property type="molecule type" value="mRNA"/>
</dbReference>
<dbReference type="EMBL" id="AE006462">
    <property type="protein sequence ID" value="AAK61212.1"/>
    <property type="status" value="ALT_SEQ"/>
    <property type="molecule type" value="Genomic_DNA"/>
</dbReference>
<dbReference type="EMBL" id="Z69719">
    <property type="protein sequence ID" value="CAI95608.1"/>
    <property type="molecule type" value="Genomic_DNA"/>
</dbReference>
<dbReference type="EMBL" id="CH471112">
    <property type="protein sequence ID" value="EAW85873.1"/>
    <property type="status" value="ALT_SEQ"/>
    <property type="molecule type" value="Genomic_DNA"/>
</dbReference>
<dbReference type="EMBL" id="CH471112">
    <property type="protein sequence ID" value="EAW85876.1"/>
    <property type="molecule type" value="Genomic_DNA"/>
</dbReference>
<dbReference type="EMBL" id="BC014425">
    <property type="protein sequence ID" value="AAH14425.1"/>
    <property type="molecule type" value="mRNA"/>
</dbReference>
<dbReference type="EMBL" id="M99624">
    <property type="protein sequence ID" value="AAA02490.1"/>
    <property type="status" value="ALT_INIT"/>
    <property type="molecule type" value="mRNA"/>
</dbReference>
<dbReference type="CCDS" id="CCDS32344.1"/>
<dbReference type="RefSeq" id="NP_071895.3">
    <property type="nucleotide sequence ID" value="NM_022450.3"/>
</dbReference>
<dbReference type="RefSeq" id="XP_005255551.1">
    <property type="nucleotide sequence ID" value="XM_005255494.1"/>
</dbReference>
<dbReference type="SMR" id="Q96CC6"/>
<dbReference type="BioGRID" id="122129">
    <property type="interactions" value="13"/>
</dbReference>
<dbReference type="ELM" id="Q96CC6"/>
<dbReference type="FunCoup" id="Q96CC6">
    <property type="interactions" value="410"/>
</dbReference>
<dbReference type="IntAct" id="Q96CC6">
    <property type="interactions" value="4"/>
</dbReference>
<dbReference type="STRING" id="9606.ENSP00000262316"/>
<dbReference type="MEROPS" id="S54.952"/>
<dbReference type="GlyCosmos" id="Q96CC6">
    <property type="glycosylation" value="1 site, No reported glycans"/>
</dbReference>
<dbReference type="GlyGen" id="Q96CC6">
    <property type="glycosylation" value="2 sites, 1 N-linked glycan (1 site)"/>
</dbReference>
<dbReference type="iPTMnet" id="Q96CC6"/>
<dbReference type="PhosphoSitePlus" id="Q96CC6"/>
<dbReference type="SwissPalm" id="Q96CC6"/>
<dbReference type="BioMuta" id="RHBDF1"/>
<dbReference type="DMDM" id="190360226"/>
<dbReference type="jPOST" id="Q96CC6"/>
<dbReference type="MassIVE" id="Q96CC6"/>
<dbReference type="PaxDb" id="9606-ENSP00000262316"/>
<dbReference type="PeptideAtlas" id="Q96CC6"/>
<dbReference type="ProteomicsDB" id="76178"/>
<dbReference type="Antibodypedia" id="22449">
    <property type="antibodies" value="30 antibodies from 14 providers"/>
</dbReference>
<dbReference type="DNASU" id="64285"/>
<dbReference type="Ensembl" id="ENST00000262316.10">
    <property type="protein sequence ID" value="ENSP00000262316.5"/>
    <property type="gene ID" value="ENSG00000007384.15"/>
</dbReference>
<dbReference type="GeneID" id="64285"/>
<dbReference type="KEGG" id="hsa:64285"/>
<dbReference type="MANE-Select" id="ENST00000262316.10">
    <property type="protein sequence ID" value="ENSP00000262316.5"/>
    <property type="RefSeq nucleotide sequence ID" value="NM_022450.5"/>
    <property type="RefSeq protein sequence ID" value="NP_071895.3"/>
</dbReference>
<dbReference type="UCSC" id="uc002cfl.4">
    <property type="organism name" value="human"/>
</dbReference>
<dbReference type="AGR" id="HGNC:20561"/>
<dbReference type="CTD" id="64285"/>
<dbReference type="DisGeNET" id="64285"/>
<dbReference type="GeneCards" id="RHBDF1"/>
<dbReference type="HGNC" id="HGNC:20561">
    <property type="gene designation" value="RHBDF1"/>
</dbReference>
<dbReference type="HPA" id="ENSG00000007384">
    <property type="expression patterns" value="Low tissue specificity"/>
</dbReference>
<dbReference type="MIM" id="614403">
    <property type="type" value="gene"/>
</dbReference>
<dbReference type="neXtProt" id="NX_Q96CC6"/>
<dbReference type="OpenTargets" id="ENSG00000007384"/>
<dbReference type="PharmGKB" id="PA25563"/>
<dbReference type="VEuPathDB" id="HostDB:ENSG00000007384"/>
<dbReference type="eggNOG" id="KOG2290">
    <property type="taxonomic scope" value="Eukaryota"/>
</dbReference>
<dbReference type="GeneTree" id="ENSGT00940000156278"/>
<dbReference type="HOGENOM" id="CLU_011531_1_1_1"/>
<dbReference type="InParanoid" id="Q96CC6"/>
<dbReference type="OMA" id="GGTENMA"/>
<dbReference type="OrthoDB" id="2146116at2759"/>
<dbReference type="PAN-GO" id="Q96CC6">
    <property type="GO annotations" value="3 GO annotations based on evolutionary models"/>
</dbReference>
<dbReference type="PhylomeDB" id="Q96CC6"/>
<dbReference type="TreeFam" id="TF312988"/>
<dbReference type="PathwayCommons" id="Q96CC6"/>
<dbReference type="SignaLink" id="Q96CC6"/>
<dbReference type="BioGRID-ORCS" id="64285">
    <property type="hits" value="44 hits in 1153 CRISPR screens"/>
</dbReference>
<dbReference type="ChiTaRS" id="RHBDF1">
    <property type="organism name" value="human"/>
</dbReference>
<dbReference type="GeneWiki" id="RHBDF1"/>
<dbReference type="GenomeRNAi" id="64285"/>
<dbReference type="Pharos" id="Q96CC6">
    <property type="development level" value="Tbio"/>
</dbReference>
<dbReference type="PRO" id="PR:Q96CC6"/>
<dbReference type="Proteomes" id="UP000005640">
    <property type="component" value="Chromosome 16"/>
</dbReference>
<dbReference type="RNAct" id="Q96CC6">
    <property type="molecule type" value="protein"/>
</dbReference>
<dbReference type="Bgee" id="ENSG00000007384">
    <property type="expression patterns" value="Expressed in tibial nerve and 184 other cell types or tissues"/>
</dbReference>
<dbReference type="ExpressionAtlas" id="Q96CC6">
    <property type="expression patterns" value="baseline and differential"/>
</dbReference>
<dbReference type="GO" id="GO:0005789">
    <property type="term" value="C:endoplasmic reticulum membrane"/>
    <property type="evidence" value="ECO:0000314"/>
    <property type="project" value="UniProtKB"/>
</dbReference>
<dbReference type="GO" id="GO:0000139">
    <property type="term" value="C:Golgi membrane"/>
    <property type="evidence" value="ECO:0000314"/>
    <property type="project" value="UniProtKB"/>
</dbReference>
<dbReference type="GO" id="GO:0019838">
    <property type="term" value="F:growth factor binding"/>
    <property type="evidence" value="ECO:0007669"/>
    <property type="project" value="UniProtKB-KW"/>
</dbReference>
<dbReference type="GO" id="GO:0016477">
    <property type="term" value="P:cell migration"/>
    <property type="evidence" value="ECO:0000315"/>
    <property type="project" value="UniProtKB"/>
</dbReference>
<dbReference type="GO" id="GO:0008283">
    <property type="term" value="P:cell population proliferation"/>
    <property type="evidence" value="ECO:0000315"/>
    <property type="project" value="UniProtKB"/>
</dbReference>
<dbReference type="GO" id="GO:0050709">
    <property type="term" value="P:negative regulation of protein secretion"/>
    <property type="evidence" value="ECO:0000314"/>
    <property type="project" value="UniProtKB"/>
</dbReference>
<dbReference type="GO" id="GO:0015031">
    <property type="term" value="P:protein transport"/>
    <property type="evidence" value="ECO:0007669"/>
    <property type="project" value="UniProtKB-KW"/>
</dbReference>
<dbReference type="GO" id="GO:0042058">
    <property type="term" value="P:regulation of epidermal growth factor receptor signaling pathway"/>
    <property type="evidence" value="ECO:0000315"/>
    <property type="project" value="UniProtKB"/>
</dbReference>
<dbReference type="GO" id="GO:0061136">
    <property type="term" value="P:regulation of proteasomal protein catabolic process"/>
    <property type="evidence" value="ECO:0000314"/>
    <property type="project" value="UniProtKB"/>
</dbReference>
<dbReference type="GO" id="GO:0050708">
    <property type="term" value="P:regulation of protein secretion"/>
    <property type="evidence" value="ECO:0000315"/>
    <property type="project" value="UniProtKB"/>
</dbReference>
<dbReference type="FunFam" id="1.20.1540.10:FF:000001">
    <property type="entry name" value="Putative inactive rhomboid protein 1"/>
    <property type="match status" value="1"/>
</dbReference>
<dbReference type="Gene3D" id="1.20.1540.10">
    <property type="entry name" value="Rhomboid-like"/>
    <property type="match status" value="1"/>
</dbReference>
<dbReference type="InterPro" id="IPR051512">
    <property type="entry name" value="Inactive_Rhomboid"/>
</dbReference>
<dbReference type="InterPro" id="IPR022241">
    <property type="entry name" value="iRhom1_2_N"/>
</dbReference>
<dbReference type="InterPro" id="IPR022764">
    <property type="entry name" value="Peptidase_S54_rhomboid_dom"/>
</dbReference>
<dbReference type="InterPro" id="IPR035952">
    <property type="entry name" value="Rhomboid-like_sf"/>
</dbReference>
<dbReference type="PANTHER" id="PTHR45965">
    <property type="entry name" value="INACTIVE RHOMBOID PROTEIN"/>
    <property type="match status" value="1"/>
</dbReference>
<dbReference type="PANTHER" id="PTHR45965:SF4">
    <property type="entry name" value="INACTIVE RHOMBOID PROTEIN 1"/>
    <property type="match status" value="1"/>
</dbReference>
<dbReference type="Pfam" id="PF12595">
    <property type="entry name" value="iRhom1-2_N"/>
    <property type="match status" value="1"/>
</dbReference>
<dbReference type="Pfam" id="PF01694">
    <property type="entry name" value="Rhomboid"/>
    <property type="match status" value="1"/>
</dbReference>
<dbReference type="SUPFAM" id="SSF144091">
    <property type="entry name" value="Rhomboid-like"/>
    <property type="match status" value="1"/>
</dbReference>
<proteinExistence type="evidence at protein level"/>
<accession>Q96CC6</accession>
<accession>Q04842</accession>
<accession>Q1W6H2</accession>
<accession>Q4TT59</accession>
<accession>Q96S34</accession>
<accession>Q9H6E1</accession>
<reference key="1">
    <citation type="journal article" date="2006" name="Science">
        <title>A regulatory SNP causes a human genetic disease by creating a new transcriptional promoter.</title>
        <authorList>
            <person name="De Gobbi M."/>
            <person name="Viprakasit V."/>
            <person name="Hughes J.R."/>
            <person name="Fisher C."/>
            <person name="Buckle V.J."/>
            <person name="Ayyub H."/>
            <person name="Gibbons R.J."/>
            <person name="Vernimmen D."/>
            <person name="Yoshinaga Y."/>
            <person name="de Jong P."/>
            <person name="Cheng J.-F."/>
            <person name="Rubin E.M."/>
            <person name="Wood W.G."/>
            <person name="Bowden D."/>
            <person name="Higgs D.R."/>
        </authorList>
    </citation>
    <scope>NUCLEOTIDE SEQUENCE [GENOMIC DNA]</scope>
</reference>
<reference key="2">
    <citation type="journal article" date="2004" name="Nat. Genet.">
        <title>Complete sequencing and characterization of 21,243 full-length human cDNAs.</title>
        <authorList>
            <person name="Ota T."/>
            <person name="Suzuki Y."/>
            <person name="Nishikawa T."/>
            <person name="Otsuki T."/>
            <person name="Sugiyama T."/>
            <person name="Irie R."/>
            <person name="Wakamatsu A."/>
            <person name="Hayashi K."/>
            <person name="Sato H."/>
            <person name="Nagai K."/>
            <person name="Kimura K."/>
            <person name="Makita H."/>
            <person name="Sekine M."/>
            <person name="Obayashi M."/>
            <person name="Nishi T."/>
            <person name="Shibahara T."/>
            <person name="Tanaka T."/>
            <person name="Ishii S."/>
            <person name="Yamamoto J."/>
            <person name="Saito K."/>
            <person name="Kawai Y."/>
            <person name="Isono Y."/>
            <person name="Nakamura Y."/>
            <person name="Nagahari K."/>
            <person name="Murakami K."/>
            <person name="Yasuda T."/>
            <person name="Iwayanagi T."/>
            <person name="Wagatsuma M."/>
            <person name="Shiratori A."/>
            <person name="Sudo H."/>
            <person name="Hosoiri T."/>
            <person name="Kaku Y."/>
            <person name="Kodaira H."/>
            <person name="Kondo H."/>
            <person name="Sugawara M."/>
            <person name="Takahashi M."/>
            <person name="Kanda K."/>
            <person name="Yokoi T."/>
            <person name="Furuya T."/>
            <person name="Kikkawa E."/>
            <person name="Omura Y."/>
            <person name="Abe K."/>
            <person name="Kamihara K."/>
            <person name="Katsuta N."/>
            <person name="Sato K."/>
            <person name="Tanikawa M."/>
            <person name="Yamazaki M."/>
            <person name="Ninomiya K."/>
            <person name="Ishibashi T."/>
            <person name="Yamashita H."/>
            <person name="Murakawa K."/>
            <person name="Fujimori K."/>
            <person name="Tanai H."/>
            <person name="Kimata M."/>
            <person name="Watanabe M."/>
            <person name="Hiraoka S."/>
            <person name="Chiba Y."/>
            <person name="Ishida S."/>
            <person name="Ono Y."/>
            <person name="Takiguchi S."/>
            <person name="Watanabe S."/>
            <person name="Yosida M."/>
            <person name="Hotuta T."/>
            <person name="Kusano J."/>
            <person name="Kanehori K."/>
            <person name="Takahashi-Fujii A."/>
            <person name="Hara H."/>
            <person name="Tanase T.-O."/>
            <person name="Nomura Y."/>
            <person name="Togiya S."/>
            <person name="Komai F."/>
            <person name="Hara R."/>
            <person name="Takeuchi K."/>
            <person name="Arita M."/>
            <person name="Imose N."/>
            <person name="Musashino K."/>
            <person name="Yuuki H."/>
            <person name="Oshima A."/>
            <person name="Sasaki N."/>
            <person name="Aotsuka S."/>
            <person name="Yoshikawa Y."/>
            <person name="Matsunawa H."/>
            <person name="Ichihara T."/>
            <person name="Shiohata N."/>
            <person name="Sano S."/>
            <person name="Moriya S."/>
            <person name="Momiyama H."/>
            <person name="Satoh N."/>
            <person name="Takami S."/>
            <person name="Terashima Y."/>
            <person name="Suzuki O."/>
            <person name="Nakagawa S."/>
            <person name="Senoh A."/>
            <person name="Mizoguchi H."/>
            <person name="Goto Y."/>
            <person name="Shimizu F."/>
            <person name="Wakebe H."/>
            <person name="Hishigaki H."/>
            <person name="Watanabe T."/>
            <person name="Sugiyama A."/>
            <person name="Takemoto M."/>
            <person name="Kawakami B."/>
            <person name="Yamazaki M."/>
            <person name="Watanabe K."/>
            <person name="Kumagai A."/>
            <person name="Itakura S."/>
            <person name="Fukuzumi Y."/>
            <person name="Fujimori Y."/>
            <person name="Komiyama M."/>
            <person name="Tashiro H."/>
            <person name="Tanigami A."/>
            <person name="Fujiwara T."/>
            <person name="Ono T."/>
            <person name="Yamada K."/>
            <person name="Fujii Y."/>
            <person name="Ozaki K."/>
            <person name="Hirao M."/>
            <person name="Ohmori Y."/>
            <person name="Kawabata A."/>
            <person name="Hikiji T."/>
            <person name="Kobatake N."/>
            <person name="Inagaki H."/>
            <person name="Ikema Y."/>
            <person name="Okamoto S."/>
            <person name="Okitani R."/>
            <person name="Kawakami T."/>
            <person name="Noguchi S."/>
            <person name="Itoh T."/>
            <person name="Shigeta K."/>
            <person name="Senba T."/>
            <person name="Matsumura K."/>
            <person name="Nakajima Y."/>
            <person name="Mizuno T."/>
            <person name="Morinaga M."/>
            <person name="Sasaki M."/>
            <person name="Togashi T."/>
            <person name="Oyama M."/>
            <person name="Hata H."/>
            <person name="Watanabe M."/>
            <person name="Komatsu T."/>
            <person name="Mizushima-Sugano J."/>
            <person name="Satoh T."/>
            <person name="Shirai Y."/>
            <person name="Takahashi Y."/>
            <person name="Nakagawa K."/>
            <person name="Okumura K."/>
            <person name="Nagase T."/>
            <person name="Nomura N."/>
            <person name="Kikuchi H."/>
            <person name="Masuho Y."/>
            <person name="Yamashita R."/>
            <person name="Nakai K."/>
            <person name="Yada T."/>
            <person name="Nakamura Y."/>
            <person name="Ohara O."/>
            <person name="Isogai T."/>
            <person name="Sugano S."/>
        </authorList>
    </citation>
    <scope>NUCLEOTIDE SEQUENCE [LARGE SCALE MRNA]</scope>
</reference>
<reference key="3">
    <citation type="journal article" date="2001" name="Hum. Mol. Genet.">
        <title>Sequence, structure and pathology of the fully annotated terminal 2 Mb of the short arm of human chromosome 16.</title>
        <authorList>
            <person name="Daniels R.J."/>
            <person name="Peden J.F."/>
            <person name="Lloyd C."/>
            <person name="Horsley S.W."/>
            <person name="Clark K."/>
            <person name="Tufarelli C."/>
            <person name="Kearney L."/>
            <person name="Buckle V.J."/>
            <person name="Doggett N.A."/>
            <person name="Flint J."/>
            <person name="Higgs D.R."/>
        </authorList>
    </citation>
    <scope>NUCLEOTIDE SEQUENCE [LARGE SCALE GENOMIC DNA]</scope>
</reference>
<reference key="4">
    <citation type="journal article" date="2004" name="Nature">
        <title>The sequence and analysis of duplication-rich human chromosome 16.</title>
        <authorList>
            <person name="Martin J."/>
            <person name="Han C."/>
            <person name="Gordon L.A."/>
            <person name="Terry A."/>
            <person name="Prabhakar S."/>
            <person name="She X."/>
            <person name="Xie G."/>
            <person name="Hellsten U."/>
            <person name="Chan Y.M."/>
            <person name="Altherr M."/>
            <person name="Couronne O."/>
            <person name="Aerts A."/>
            <person name="Bajorek E."/>
            <person name="Black S."/>
            <person name="Blumer H."/>
            <person name="Branscomb E."/>
            <person name="Brown N.C."/>
            <person name="Bruno W.J."/>
            <person name="Buckingham J.M."/>
            <person name="Callen D.F."/>
            <person name="Campbell C.S."/>
            <person name="Campbell M.L."/>
            <person name="Campbell E.W."/>
            <person name="Caoile C."/>
            <person name="Challacombe J.F."/>
            <person name="Chasteen L.A."/>
            <person name="Chertkov O."/>
            <person name="Chi H.C."/>
            <person name="Christensen M."/>
            <person name="Clark L.M."/>
            <person name="Cohn J.D."/>
            <person name="Denys M."/>
            <person name="Detter J.C."/>
            <person name="Dickson M."/>
            <person name="Dimitrijevic-Bussod M."/>
            <person name="Escobar J."/>
            <person name="Fawcett J.J."/>
            <person name="Flowers D."/>
            <person name="Fotopulos D."/>
            <person name="Glavina T."/>
            <person name="Gomez M."/>
            <person name="Gonzales E."/>
            <person name="Goodstein D."/>
            <person name="Goodwin L.A."/>
            <person name="Grady D.L."/>
            <person name="Grigoriev I."/>
            <person name="Groza M."/>
            <person name="Hammon N."/>
            <person name="Hawkins T."/>
            <person name="Haydu L."/>
            <person name="Hildebrand C.E."/>
            <person name="Huang W."/>
            <person name="Israni S."/>
            <person name="Jett J."/>
            <person name="Jewett P.B."/>
            <person name="Kadner K."/>
            <person name="Kimball H."/>
            <person name="Kobayashi A."/>
            <person name="Krawczyk M.-C."/>
            <person name="Leyba T."/>
            <person name="Longmire J.L."/>
            <person name="Lopez F."/>
            <person name="Lou Y."/>
            <person name="Lowry S."/>
            <person name="Ludeman T."/>
            <person name="Manohar C.F."/>
            <person name="Mark G.A."/>
            <person name="McMurray K.L."/>
            <person name="Meincke L.J."/>
            <person name="Morgan J."/>
            <person name="Moyzis R.K."/>
            <person name="Mundt M.O."/>
            <person name="Munk A.C."/>
            <person name="Nandkeshwar R.D."/>
            <person name="Pitluck S."/>
            <person name="Pollard M."/>
            <person name="Predki P."/>
            <person name="Parson-Quintana B."/>
            <person name="Ramirez L."/>
            <person name="Rash S."/>
            <person name="Retterer J."/>
            <person name="Ricke D.O."/>
            <person name="Robinson D.L."/>
            <person name="Rodriguez A."/>
            <person name="Salamov A."/>
            <person name="Saunders E.H."/>
            <person name="Scott D."/>
            <person name="Shough T."/>
            <person name="Stallings R.L."/>
            <person name="Stalvey M."/>
            <person name="Sutherland R.D."/>
            <person name="Tapia R."/>
            <person name="Tesmer J.G."/>
            <person name="Thayer N."/>
            <person name="Thompson L.S."/>
            <person name="Tice H."/>
            <person name="Torney D.C."/>
            <person name="Tran-Gyamfi M."/>
            <person name="Tsai M."/>
            <person name="Ulanovsky L.E."/>
            <person name="Ustaszewska A."/>
            <person name="Vo N."/>
            <person name="White P.S."/>
            <person name="Williams A.L."/>
            <person name="Wills P.L."/>
            <person name="Wu J.-R."/>
            <person name="Wu K."/>
            <person name="Yang J."/>
            <person name="DeJong P."/>
            <person name="Bruce D."/>
            <person name="Doggett N.A."/>
            <person name="Deaven L."/>
            <person name="Schmutz J."/>
            <person name="Grimwood J."/>
            <person name="Richardson P."/>
            <person name="Rokhsar D.S."/>
            <person name="Eichler E.E."/>
            <person name="Gilna P."/>
            <person name="Lucas S.M."/>
            <person name="Myers R.M."/>
            <person name="Rubin E.M."/>
            <person name="Pennacchio L.A."/>
        </authorList>
    </citation>
    <scope>NUCLEOTIDE SEQUENCE [LARGE SCALE GENOMIC DNA]</scope>
</reference>
<reference key="5">
    <citation type="submission" date="2005-09" db="EMBL/GenBank/DDBJ databases">
        <authorList>
            <person name="Mural R.J."/>
            <person name="Istrail S."/>
            <person name="Sutton G.G."/>
            <person name="Florea L."/>
            <person name="Halpern A.L."/>
            <person name="Mobarry C.M."/>
            <person name="Lippert R."/>
            <person name="Walenz B."/>
            <person name="Shatkay H."/>
            <person name="Dew I."/>
            <person name="Miller J.R."/>
            <person name="Flanigan M.J."/>
            <person name="Edwards N.J."/>
            <person name="Bolanos R."/>
            <person name="Fasulo D."/>
            <person name="Halldorsson B.V."/>
            <person name="Hannenhalli S."/>
            <person name="Turner R."/>
            <person name="Yooseph S."/>
            <person name="Lu F."/>
            <person name="Nusskern D.R."/>
            <person name="Shue B.C."/>
            <person name="Zheng X.H."/>
            <person name="Zhong F."/>
            <person name="Delcher A.L."/>
            <person name="Huson D.H."/>
            <person name="Kravitz S.A."/>
            <person name="Mouchard L."/>
            <person name="Reinert K."/>
            <person name="Remington K.A."/>
            <person name="Clark A.G."/>
            <person name="Waterman M.S."/>
            <person name="Eichler E.E."/>
            <person name="Adams M.D."/>
            <person name="Hunkapiller M.W."/>
            <person name="Myers E.W."/>
            <person name="Venter J.C."/>
        </authorList>
    </citation>
    <scope>NUCLEOTIDE SEQUENCE [LARGE SCALE GENOMIC DNA]</scope>
</reference>
<reference key="6">
    <citation type="journal article" date="2004" name="Genome Res.">
        <title>The status, quality, and expansion of the NIH full-length cDNA project: the Mammalian Gene Collection (MGC).</title>
        <authorList>
            <consortium name="The MGC Project Team"/>
        </authorList>
    </citation>
    <scope>NUCLEOTIDE SEQUENCE [LARGE SCALE MRNA]</scope>
    <source>
        <tissue>Placenta</tissue>
    </source>
</reference>
<reference key="7">
    <citation type="journal article" date="1993" name="Mamm. Genome">
        <title>Homology of a 130-kb region enclosing the alpha-globin gene cluster, the alpha-locus controlling region, and two non-globin genes in human and mouse.</title>
        <authorList>
            <person name="Kielman M.F."/>
            <person name="Smits R."/>
            <person name="Devi T.S."/>
            <person name="Fodde R."/>
            <person name="Bernini L.F."/>
        </authorList>
    </citation>
    <scope>NUCLEOTIDE SEQUENCE [MRNA] OF 510-669</scope>
    <scope>TISSUE SPECIFICITY</scope>
    <source>
        <tissue>Brain</tissue>
    </source>
</reference>
<reference key="8">
    <citation type="journal article" date="2005" name="Dev. Dyn.">
        <title>Characterization of a human rhomboid homolog, p100hRho/RHBDF1, which interacts with TGF-alpha family ligands.</title>
        <authorList>
            <person name="Nakagawa T."/>
            <person name="Guichard A."/>
            <person name="Castro C.P."/>
            <person name="Xiao Y."/>
            <person name="Rizen M."/>
            <person name="Zhang H.-Z."/>
            <person name="Hu D."/>
            <person name="Bang A."/>
            <person name="Helms J."/>
            <person name="Bier E."/>
            <person name="Derynck R."/>
        </authorList>
    </citation>
    <scope>FUNCTION</scope>
    <scope>SUBCELLULAR LOCATION</scope>
    <scope>SUBUNIT</scope>
    <scope>INTERACTION WITH TGFA AND HBEGF</scope>
    <scope>GLYCOSYLATION AT ASN-583</scope>
    <scope>MUTAGENESIS OF ASN-131; ASN-381 AND ASN-583</scope>
    <scope>TISSUE SPECIFICITY</scope>
</reference>
<reference key="9">
    <citation type="journal article" date="2008" name="Mol. Cancer Ther.">
        <title>Human rhomboid family-1 gene silencing causes apoptosis or autophagy to epithelial cancer cells and inhibits xenograft tumor growth.</title>
        <authorList>
            <person name="Yan Z."/>
            <person name="Zou H."/>
            <person name="Tian F."/>
            <person name="Grandis J.R."/>
            <person name="Mixson A.J."/>
            <person name="Lu P.Y."/>
            <person name="Li L.Y."/>
        </authorList>
    </citation>
    <scope>FUNCTION</scope>
</reference>
<reference key="10">
    <citation type="journal article" date="2009" name="FASEB J.">
        <title>Human rhomboid family-1 gene RHBDF1 participates in GPCR-mediated transactivation of EGFR growth signals in head and neck squamous cancer cells.</title>
        <authorList>
            <person name="Zou H."/>
            <person name="Thomas S.M."/>
            <person name="Yan Z.W."/>
            <person name="Grandis J.R."/>
            <person name="Vogt A."/>
            <person name="Li L.Y."/>
        </authorList>
    </citation>
    <scope>FUNCTION</scope>
    <scope>SUBCELLULAR LOCATION</scope>
</reference>
<reference key="11">
    <citation type="journal article" date="2011" name="Cell">
        <title>Rhomboid family pseudoproteases use the ER quality control machinery to regulate intercellular signaling.</title>
        <authorList>
            <person name="Zettl M."/>
            <person name="Adrain C."/>
            <person name="Strisovsky K."/>
            <person name="Lastun V."/>
            <person name="Freeman M."/>
        </authorList>
    </citation>
    <scope>FUNCTION</scope>
    <scope>SUBCELLULAR LOCATION</scope>
    <scope>INTERACTION WITH EGF</scope>
</reference>
<reference key="12">
    <citation type="journal article" date="2013" name="J. Proteome Res.">
        <title>Toward a comprehensive characterization of a human cancer cell phosphoproteome.</title>
        <authorList>
            <person name="Zhou H."/>
            <person name="Di Palma S."/>
            <person name="Preisinger C."/>
            <person name="Peng M."/>
            <person name="Polat A.N."/>
            <person name="Heck A.J."/>
            <person name="Mohammed S."/>
        </authorList>
    </citation>
    <scope>PHOSPHORYLATION [LARGE SCALE ANALYSIS] AT SER-76 AND SER-390</scope>
    <scope>IDENTIFICATION BY MASS SPECTROMETRY [LARGE SCALE ANALYSIS]</scope>
    <source>
        <tissue>Cervix carcinoma</tissue>
    </source>
</reference>
<reference key="13">
    <citation type="journal article" date="2018" name="Elife">
        <title>iTAP, a novel iRhom interactor, controls TNF secretion by policing the stability of iRhom/TACE.</title>
        <authorList>
            <person name="Oikonomidi I."/>
            <person name="Burbridge E."/>
            <person name="Cavadas M."/>
            <person name="Sullivan G."/>
            <person name="Collis B."/>
            <person name="Naegele H."/>
            <person name="Clancy D."/>
            <person name="Brezinova J."/>
            <person name="Hu T."/>
            <person name="Bileck A."/>
            <person name="Gerner C."/>
            <person name="Bolado A."/>
            <person name="von Kriegsheim A."/>
            <person name="Martin S.J."/>
            <person name="Steinberg F."/>
            <person name="Strisovsky K."/>
            <person name="Adrain C."/>
        </authorList>
    </citation>
    <scope>INTERACTION WITH ADAM17 AND FRMD8</scope>
</reference>
<reference key="14">
    <citation type="journal article" date="2018" name="Elife">
        <title>FRMD8 promotes inflammatory and growth factor signalling by stabilising the iRhom/ADAM17 sheddase complex.</title>
        <authorList>
            <person name="Kuenzel U."/>
            <person name="Grieve A.G."/>
            <person name="Meng Y."/>
            <person name="Sieber B."/>
            <person name="Cowley S.A."/>
            <person name="Freeman M."/>
        </authorList>
    </citation>
    <scope>INTERACTION WITH FRMD8</scope>
</reference>
<comment type="function">
    <text evidence="3 4 5 6">Regulates ADAM17 protease, a sheddase of the epidermal growth factor (EGF) receptor ligands and TNF, thereby plays a role in sleep, cell survival, proliferation, migration and inflammation. Does not exhibit any protease activity on its own.</text>
</comment>
<comment type="subunit">
    <text evidence="3 6 7 8">Homodimer, or homooligomer. Interacts with TGFA and HBEGF (PubMed:15965977). Interacts with EGF; may retain EGF in the endoplasmic reticulum and regulates its degradation through the endoplasmic reticulum-associated degradation (ERAD) (PubMed:21439629). Interacts (via cytoplasmic N-terminus) with FRMD8/iTAP; this interaction leads to mutual protein stabilization (PubMed:29897333, PubMed:29897336). Interacts with ADAM17/TACE (PubMed:29897333).</text>
</comment>
<comment type="interaction">
    <interactant intactId="EBI-3865223">
        <id>Q96CC6</id>
    </interactant>
    <interactant intactId="EBI-12039345">
        <id>Q9UBR4-2</id>
        <label>LHX3</label>
    </interactant>
    <organismsDiffer>false</organismsDiffer>
    <experiments>3</experiments>
</comment>
<comment type="subcellular location">
    <subcellularLocation>
        <location evidence="3 5 6">Endoplasmic reticulum membrane</location>
        <topology evidence="2">Multi-pass membrane protein</topology>
    </subcellularLocation>
    <subcellularLocation>
        <location evidence="3 5">Golgi apparatus membrane</location>
        <topology evidence="2">Multi-pass membrane protein</topology>
    </subcellularLocation>
    <text evidence="3">Predominantly localized in the endoplasmic reticulum membrane (PubMed:15965977).</text>
</comment>
<comment type="tissue specificity">
    <text evidence="3 9">Highly expressed in cerebellum, cerebrum, heart, skeletal muscle, placenta, pancreatic islet and testis. Detected at lower levels in colon, kidney, small intestine and lung.</text>
</comment>
<comment type="PTM">
    <text evidence="3">N-glycosylated.</text>
</comment>
<comment type="similarity">
    <text evidence="10">Belongs to the peptidase S54 family.</text>
</comment>
<comment type="sequence caution" evidence="10">
    <conflict type="erroneous initiation">
        <sequence resource="EMBL-CDS" id="AAA02490"/>
    </conflict>
    <text>Truncated N-terminus.</text>
</comment>
<comment type="sequence caution" evidence="10">
    <conflict type="erroneous gene model prediction">
        <sequence resource="EMBL-CDS" id="AAK61212"/>
    </conflict>
</comment>
<comment type="sequence caution" evidence="10">
    <conflict type="erroneous gene model prediction">
        <sequence resource="EMBL-CDS" id="ABD95905"/>
    </conflict>
</comment>
<comment type="sequence caution" evidence="10">
    <conflict type="erroneous gene model prediction">
        <sequence resource="EMBL-CDS" id="EAW85873"/>
    </conflict>
</comment>
<feature type="chain" id="PRO_0000340104" description="Inactive rhomboid protein 1">
    <location>
        <begin position="1"/>
        <end position="855"/>
    </location>
</feature>
<feature type="topological domain" description="Cytoplasmic" evidence="2">
    <location>
        <begin position="1"/>
        <end position="411"/>
    </location>
</feature>
<feature type="transmembrane region" description="Helical" evidence="2">
    <location>
        <begin position="412"/>
        <end position="432"/>
    </location>
</feature>
<feature type="topological domain" description="Lumenal" evidence="2">
    <location>
        <begin position="433"/>
        <end position="655"/>
    </location>
</feature>
<feature type="transmembrane region" description="Helical" evidence="2">
    <location>
        <begin position="656"/>
        <end position="676"/>
    </location>
</feature>
<feature type="topological domain" description="Cytoplasmic" evidence="2">
    <location>
        <begin position="677"/>
        <end position="691"/>
    </location>
</feature>
<feature type="transmembrane region" description="Helical" evidence="2">
    <location>
        <begin position="692"/>
        <end position="712"/>
    </location>
</feature>
<feature type="topological domain" description="Lumenal" evidence="2">
    <location>
        <begin position="713"/>
        <end position="714"/>
    </location>
</feature>
<feature type="transmembrane region" description="Helical" evidence="2">
    <location>
        <begin position="715"/>
        <end position="735"/>
    </location>
</feature>
<feature type="topological domain" description="Cytoplasmic" evidence="2">
    <location>
        <begin position="736"/>
        <end position="746"/>
    </location>
</feature>
<feature type="transmembrane region" description="Helical" evidence="2">
    <location>
        <begin position="747"/>
        <end position="767"/>
    </location>
</feature>
<feature type="topological domain" description="Lumenal" evidence="2">
    <location>
        <begin position="768"/>
        <end position="772"/>
    </location>
</feature>
<feature type="transmembrane region" description="Helical" evidence="2">
    <location>
        <begin position="773"/>
        <end position="793"/>
    </location>
</feature>
<feature type="topological domain" description="Cytoplasmic" evidence="2">
    <location>
        <begin position="794"/>
        <end position="803"/>
    </location>
</feature>
<feature type="transmembrane region" description="Helical" evidence="2">
    <location>
        <begin position="804"/>
        <end position="824"/>
    </location>
</feature>
<feature type="topological domain" description="Lumenal" evidence="2">
    <location>
        <begin position="825"/>
        <end position="855"/>
    </location>
</feature>
<feature type="modified residue" description="Phosphoserine" evidence="11">
    <location>
        <position position="76"/>
    </location>
</feature>
<feature type="modified residue" description="Phosphoserine" evidence="1">
    <location>
        <position position="176"/>
    </location>
</feature>
<feature type="modified residue" description="Phosphothreonine" evidence="1">
    <location>
        <position position="180"/>
    </location>
</feature>
<feature type="modified residue" description="Phosphothreonine" evidence="1">
    <location>
        <position position="183"/>
    </location>
</feature>
<feature type="modified residue" description="Phosphoserine" evidence="11">
    <location>
        <position position="390"/>
    </location>
</feature>
<feature type="glycosylation site" description="N-linked (GlcNAc...) asparagine" evidence="3">
    <location>
        <position position="583"/>
    </location>
</feature>
<feature type="sequence variant" id="VAR_044006" description="In dbSNP:rs3213511.">
    <original>R</original>
    <variation>W</variation>
    <location>
        <position position="265"/>
    </location>
</feature>
<feature type="mutagenesis site" description="No effect." evidence="3">
    <original>N</original>
    <variation>Q</variation>
    <location>
        <position position="131"/>
    </location>
</feature>
<feature type="mutagenesis site" description="No effect." evidence="3">
    <original>N</original>
    <variation>Q</variation>
    <location>
        <position position="381"/>
    </location>
</feature>
<feature type="mutagenesis site" description="Loss of N-glycosylation." evidence="3">
    <original>N</original>
    <variation>Q</variation>
    <location>
        <position position="583"/>
    </location>
</feature>
<feature type="sequence conflict" description="In Ref. 1; ABD95905." evidence="10" ref="1">
    <original>R</original>
    <variation>C</variation>
    <location>
        <position position="5"/>
    </location>
</feature>
<feature type="sequence conflict" description="In Ref. 6; AAH14425." evidence="10" ref="6">
    <original>Q</original>
    <variation>R</variation>
    <location>
        <position position="237"/>
    </location>
</feature>
<feature type="sequence conflict" description="In Ref. 2; BAB15318." evidence="10" ref="2">
    <original>T</original>
    <variation>A</variation>
    <location>
        <position position="418"/>
    </location>
</feature>
<feature type="sequence conflict" description="In Ref. 7; AAA02490." evidence="10" ref="7">
    <original>DPR</original>
    <variation>GSQ</variation>
    <location>
        <begin position="551"/>
        <end position="553"/>
    </location>
</feature>
<sequence>MSEARRDSTSSLQRKKPPWLKLDIPSAVPLTAEEPSFLQPLRRQAFLRSVSMPAETAHISSPHHELRRPVLQRQTSITQTIRRGTADWFGVSKDSDSTQKWQRKSIRHCSQRYGKLKPQVLRELDLPSQDNVSLTSTETPPPLYVGPCQLGMQKIIDPLARGRAFRVADDTAEGLSAPHTPVTPGAASLCSFSSSRSGFHRLPRRRKRESVAKMSFRAAAALMKGRSVRDGTFRRAQRRSFTPASFLEEDTTDFPDELDTSFFAREGILHEELSTYPDEVFESPSEAALKDWEKAPEQADLTGGALDRSELERSHLMLPLERGWRKQKEGAAAPQPKVRLRQEVVSTAGPRRGQRIAVPVRKLFAREKRPYGLGMVGRLTNRTYRKRIDSFVKRQIEDMDDHRPFFTYWLTFVHSLVTILAVCIYGIAPVGFSQHETVDSVLRNRGVYENVKYVQQENFWIGPSSEALIHLGAKFSPCMRQDPQVHSFIRSAREREKHSACCVRNDRSGCVQTSEEECSSTLAVWVKWPIHPSAPELAGHKRQFGSVCHQDPRVCDEPSSEDPHEWPEDITKWPICTKNSAGNHTNHPHMDCVITGRPCCIGTKGRCEITSREYCDFMRGYFHEEATLCSQVHCMDDVCGLLPFLNPEVPDQFYRLWLSLFLHAGILHCLVSICFQMTVLRDLEKLAGWHRIAIIYLLSGVTGNLASAIFLPYRAEVGPAGSQFGILACLFVELFQSWQILARPWRAFFKLLAVVLFLFTFGLLPWIDNFAHISGFISGLFLSFAFLPYISFGKFDLYRKRCQIIIFQVVFLGLLAGLVVLFYVYPVRCEWCEFLTCIPFTDKFCEKYELDAQLH</sequence>
<gene>
    <name type="primary">RHBDF1</name>
    <name type="synonym">C16orf8</name>
    <name type="synonym">DIST1</name>
    <name type="synonym">IRHOM1</name>
</gene>
<name>RHDF1_HUMAN</name>